<proteinExistence type="evidence at protein level"/>
<name>BIEA_MOUSE</name>
<accession>Q9CY64</accession>
<accession>Q3T9C6</accession>
<accession>Q80WR6</accession>
<accession>Q9DD21</accession>
<gene>
    <name evidence="4" type="primary">Blvra</name>
</gene>
<feature type="propeptide" id="PRO_0000010854" evidence="1">
    <location>
        <begin position="1"/>
        <end position="2"/>
    </location>
</feature>
<feature type="chain" id="PRO_0000010855" description="Biliverdin reductase A">
    <location>
        <begin position="3"/>
        <end position="295"/>
    </location>
</feature>
<feature type="binding site" evidence="1">
    <location>
        <begin position="18"/>
        <end position="19"/>
    </location>
    <ligand>
        <name>NAD(+)</name>
        <dbReference type="ChEBI" id="CHEBI:57540"/>
    </ligand>
</feature>
<feature type="binding site" evidence="1">
    <location>
        <begin position="76"/>
        <end position="79"/>
    </location>
    <ligand>
        <name>NAD(+)</name>
        <dbReference type="ChEBI" id="CHEBI:57540"/>
    </ligand>
</feature>
<feature type="binding site" evidence="1">
    <location>
        <position position="97"/>
    </location>
    <ligand>
        <name>NAD(+)</name>
        <dbReference type="ChEBI" id="CHEBI:57540"/>
    </ligand>
</feature>
<feature type="binding site" evidence="1">
    <location>
        <position position="167"/>
    </location>
    <ligand>
        <name>NAD(+)</name>
        <dbReference type="ChEBI" id="CHEBI:57540"/>
    </ligand>
</feature>
<feature type="binding site" evidence="2">
    <location>
        <position position="279"/>
    </location>
    <ligand>
        <name>Zn(2+)</name>
        <dbReference type="ChEBI" id="CHEBI:29105"/>
    </ligand>
</feature>
<feature type="binding site" evidence="2">
    <location>
        <position position="280"/>
    </location>
    <ligand>
        <name>Zn(2+)</name>
        <dbReference type="ChEBI" id="CHEBI:29105"/>
    </ligand>
</feature>
<feature type="binding site" evidence="2">
    <location>
        <position position="291"/>
    </location>
    <ligand>
        <name>Zn(2+)</name>
        <dbReference type="ChEBI" id="CHEBI:29105"/>
    </ligand>
</feature>
<feature type="binding site" evidence="2">
    <location>
        <position position="292"/>
    </location>
    <ligand>
        <name>Zn(2+)</name>
        <dbReference type="ChEBI" id="CHEBI:29105"/>
    </ligand>
</feature>
<feature type="modified residue" description="Phosphoserine" evidence="5">
    <location>
        <position position="154"/>
    </location>
</feature>
<feature type="modified residue" description="Phosphothreonine" evidence="2">
    <location>
        <position position="173"/>
    </location>
</feature>
<feature type="modified residue" description="Phosphoserine" evidence="2">
    <location>
        <position position="177"/>
    </location>
</feature>
<feature type="modified residue" description="Phosphoserine" evidence="2">
    <location>
        <position position="229"/>
    </location>
</feature>
<feature type="modified residue" description="N6-acetyllysine" evidence="2">
    <location>
        <position position="247"/>
    </location>
</feature>
<feature type="modified residue" description="N6-acetyllysine" evidence="2">
    <location>
        <position position="252"/>
    </location>
</feature>
<feature type="sequence conflict" description="In Ref. 2; AAH52146." evidence="3" ref="2">
    <original>L</original>
    <variation>S</variation>
    <location>
        <position position="27"/>
    </location>
</feature>
<feature type="sequence conflict" description="In Ref. 1; BAB21950." evidence="3" ref="1">
    <original>Q</original>
    <variation>QWGGSFRYL</variation>
    <location>
        <position position="295"/>
    </location>
</feature>
<protein>
    <recommendedName>
        <fullName>Biliverdin reductase A</fullName>
        <shortName>BVR A</shortName>
        <ecNumber evidence="2">1.3.1.24</ecNumber>
    </recommendedName>
    <alternativeName>
        <fullName>Biliverdin-IX alpha-reductase</fullName>
    </alternativeName>
</protein>
<organism>
    <name type="scientific">Mus musculus</name>
    <name type="common">Mouse</name>
    <dbReference type="NCBI Taxonomy" id="10090"/>
    <lineage>
        <taxon>Eukaryota</taxon>
        <taxon>Metazoa</taxon>
        <taxon>Chordata</taxon>
        <taxon>Craniata</taxon>
        <taxon>Vertebrata</taxon>
        <taxon>Euteleostomi</taxon>
        <taxon>Mammalia</taxon>
        <taxon>Eutheria</taxon>
        <taxon>Euarchontoglires</taxon>
        <taxon>Glires</taxon>
        <taxon>Rodentia</taxon>
        <taxon>Myomorpha</taxon>
        <taxon>Muroidea</taxon>
        <taxon>Muridae</taxon>
        <taxon>Murinae</taxon>
        <taxon>Mus</taxon>
        <taxon>Mus</taxon>
    </lineage>
</organism>
<evidence type="ECO:0000250" key="1">
    <source>
        <dbReference type="UniProtKB" id="P46844"/>
    </source>
</evidence>
<evidence type="ECO:0000250" key="2">
    <source>
        <dbReference type="UniProtKB" id="P53004"/>
    </source>
</evidence>
<evidence type="ECO:0000305" key="3"/>
<evidence type="ECO:0000312" key="4">
    <source>
        <dbReference type="MGI" id="MGI:88170"/>
    </source>
</evidence>
<evidence type="ECO:0007744" key="5">
    <source>
    </source>
</evidence>
<dbReference type="EC" id="1.3.1.24" evidence="2"/>
<dbReference type="EMBL" id="AK002231">
    <property type="protein sequence ID" value="BAB21950.1"/>
    <property type="molecule type" value="mRNA"/>
</dbReference>
<dbReference type="EMBL" id="AK010847">
    <property type="protein sequence ID" value="BAB27219.1"/>
    <property type="molecule type" value="mRNA"/>
</dbReference>
<dbReference type="EMBL" id="AK172620">
    <property type="protein sequence ID" value="BAE43098.1"/>
    <property type="molecule type" value="mRNA"/>
</dbReference>
<dbReference type="EMBL" id="BC052146">
    <property type="protein sequence ID" value="AAH52146.1"/>
    <property type="molecule type" value="mRNA"/>
</dbReference>
<dbReference type="CCDS" id="CCDS16692.1"/>
<dbReference type="RefSeq" id="NP_080954.4">
    <property type="nucleotide sequence ID" value="NM_026678.4"/>
</dbReference>
<dbReference type="RefSeq" id="XP_006498634.1">
    <property type="nucleotide sequence ID" value="XM_006498571.3"/>
</dbReference>
<dbReference type="RefSeq" id="XP_006498635.1">
    <property type="nucleotide sequence ID" value="XM_006498572.5"/>
</dbReference>
<dbReference type="RefSeq" id="XP_030102511.1">
    <property type="nucleotide sequence ID" value="XM_030246651.1"/>
</dbReference>
<dbReference type="SMR" id="Q9CY64"/>
<dbReference type="BioGRID" id="225034">
    <property type="interactions" value="5"/>
</dbReference>
<dbReference type="FunCoup" id="Q9CY64">
    <property type="interactions" value="827"/>
</dbReference>
<dbReference type="STRING" id="10090.ENSMUSP00000002064"/>
<dbReference type="GlyGen" id="Q9CY64">
    <property type="glycosylation" value="1 site, 1 O-linked glycan (1 site)"/>
</dbReference>
<dbReference type="iPTMnet" id="Q9CY64"/>
<dbReference type="PhosphoSitePlus" id="Q9CY64"/>
<dbReference type="SwissPalm" id="Q9CY64"/>
<dbReference type="jPOST" id="Q9CY64"/>
<dbReference type="PaxDb" id="10090-ENSMUSP00000002064"/>
<dbReference type="PeptideAtlas" id="Q9CY64"/>
<dbReference type="ProteomicsDB" id="273488"/>
<dbReference type="Pumba" id="Q9CY64"/>
<dbReference type="Antibodypedia" id="13185">
    <property type="antibodies" value="346 antibodies from 28 providers"/>
</dbReference>
<dbReference type="DNASU" id="109778"/>
<dbReference type="Ensembl" id="ENSMUST00000002064.15">
    <property type="protein sequence ID" value="ENSMUSP00000002064.9"/>
    <property type="gene ID" value="ENSMUSG00000001999.16"/>
</dbReference>
<dbReference type="GeneID" id="109778"/>
<dbReference type="KEGG" id="mmu:109778"/>
<dbReference type="UCSC" id="uc008meq.1">
    <property type="organism name" value="mouse"/>
</dbReference>
<dbReference type="AGR" id="MGI:88170"/>
<dbReference type="CTD" id="644"/>
<dbReference type="MGI" id="MGI:88170">
    <property type="gene designation" value="Blvra"/>
</dbReference>
<dbReference type="VEuPathDB" id="HostDB:ENSMUSG00000001999"/>
<dbReference type="eggNOG" id="ENOG502QTSZ">
    <property type="taxonomic scope" value="Eukaryota"/>
</dbReference>
<dbReference type="GeneTree" id="ENSGT00390000011072"/>
<dbReference type="HOGENOM" id="CLU_053157_0_0_1"/>
<dbReference type="InParanoid" id="Q9CY64"/>
<dbReference type="OMA" id="IQKYCQH"/>
<dbReference type="PhylomeDB" id="Q9CY64"/>
<dbReference type="TreeFam" id="TF342889"/>
<dbReference type="BRENDA" id="1.3.1.24">
    <property type="organism ID" value="3474"/>
</dbReference>
<dbReference type="Reactome" id="R-MMU-189483">
    <property type="pathway name" value="Heme degradation"/>
</dbReference>
<dbReference type="Reactome" id="R-MMU-9707564">
    <property type="pathway name" value="Cytoprotection by HMOX1"/>
</dbReference>
<dbReference type="UniPathway" id="UPA00684"/>
<dbReference type="BioGRID-ORCS" id="109778">
    <property type="hits" value="1 hit in 79 CRISPR screens"/>
</dbReference>
<dbReference type="PRO" id="PR:Q9CY64"/>
<dbReference type="Proteomes" id="UP000000589">
    <property type="component" value="Chromosome 2"/>
</dbReference>
<dbReference type="RNAct" id="Q9CY64">
    <property type="molecule type" value="protein"/>
</dbReference>
<dbReference type="Bgee" id="ENSMUSG00000001999">
    <property type="expression patterns" value="Expressed in right kidney and 258 other cell types or tissues"/>
</dbReference>
<dbReference type="ExpressionAtlas" id="Q9CY64">
    <property type="expression patterns" value="baseline and differential"/>
</dbReference>
<dbReference type="GO" id="GO:0005829">
    <property type="term" value="C:cytosol"/>
    <property type="evidence" value="ECO:0000250"/>
    <property type="project" value="UniProtKB"/>
</dbReference>
<dbReference type="GO" id="GO:0106276">
    <property type="term" value="F:biliberdin reductase (NAD+) activity"/>
    <property type="evidence" value="ECO:0000250"/>
    <property type="project" value="UniProtKB"/>
</dbReference>
<dbReference type="GO" id="GO:0106277">
    <property type="term" value="F:biliverdin reductase (NADP+) activity"/>
    <property type="evidence" value="ECO:0007669"/>
    <property type="project" value="RHEA"/>
</dbReference>
<dbReference type="GO" id="GO:0004074">
    <property type="term" value="F:biliverdin reductase [NAD(P)+] activity"/>
    <property type="evidence" value="ECO:0000314"/>
    <property type="project" value="MGI"/>
</dbReference>
<dbReference type="GO" id="GO:0000166">
    <property type="term" value="F:nucleotide binding"/>
    <property type="evidence" value="ECO:0000266"/>
    <property type="project" value="MGI"/>
</dbReference>
<dbReference type="GO" id="GO:0008270">
    <property type="term" value="F:zinc ion binding"/>
    <property type="evidence" value="ECO:0007669"/>
    <property type="project" value="InterPro"/>
</dbReference>
<dbReference type="GO" id="GO:0006935">
    <property type="term" value="P:chemotaxis"/>
    <property type="evidence" value="ECO:0000315"/>
    <property type="project" value="MGI"/>
</dbReference>
<dbReference type="GO" id="GO:0038178">
    <property type="term" value="P:complement component C5a signaling pathway"/>
    <property type="evidence" value="ECO:0000315"/>
    <property type="project" value="MGI"/>
</dbReference>
<dbReference type="GO" id="GO:0006631">
    <property type="term" value="P:fatty acid metabolic process"/>
    <property type="evidence" value="ECO:0000315"/>
    <property type="project" value="MGI"/>
</dbReference>
<dbReference type="GO" id="GO:0010467">
    <property type="term" value="P:gene expression"/>
    <property type="evidence" value="ECO:0000315"/>
    <property type="project" value="MGI"/>
</dbReference>
<dbReference type="GO" id="GO:0042167">
    <property type="term" value="P:heme catabolic process"/>
    <property type="evidence" value="ECO:0000266"/>
    <property type="project" value="MGI"/>
</dbReference>
<dbReference type="GO" id="GO:0006954">
    <property type="term" value="P:inflammatory response"/>
    <property type="evidence" value="ECO:0000315"/>
    <property type="project" value="MGI"/>
</dbReference>
<dbReference type="GO" id="GO:0034440">
    <property type="term" value="P:lipid oxidation"/>
    <property type="evidence" value="ECO:0000315"/>
    <property type="project" value="MGI"/>
</dbReference>
<dbReference type="GO" id="GO:0042440">
    <property type="term" value="P:pigment metabolic process"/>
    <property type="evidence" value="ECO:0000315"/>
    <property type="project" value="MGI"/>
</dbReference>
<dbReference type="GO" id="GO:1905237">
    <property type="term" value="P:response to cyclosporin A"/>
    <property type="evidence" value="ECO:0000315"/>
    <property type="project" value="MGI"/>
</dbReference>
<dbReference type="GO" id="GO:0032094">
    <property type="term" value="P:response to food"/>
    <property type="evidence" value="ECO:0000315"/>
    <property type="project" value="MGI"/>
</dbReference>
<dbReference type="GO" id="GO:0032496">
    <property type="term" value="P:response to lipopolysaccharide"/>
    <property type="evidence" value="ECO:0000315"/>
    <property type="project" value="MGI"/>
</dbReference>
<dbReference type="GO" id="GO:0006979">
    <property type="term" value="P:response to oxidative stress"/>
    <property type="evidence" value="ECO:0000315"/>
    <property type="project" value="MGI"/>
</dbReference>
<dbReference type="GO" id="GO:0160025">
    <property type="term" value="P:sensory perception of itch"/>
    <property type="evidence" value="ECO:0000315"/>
    <property type="project" value="MGI"/>
</dbReference>
<dbReference type="GO" id="GO:0006641">
    <property type="term" value="P:triglyceride metabolic process"/>
    <property type="evidence" value="ECO:0000315"/>
    <property type="project" value="MGI"/>
</dbReference>
<dbReference type="Gene3D" id="3.30.360.10">
    <property type="entry name" value="Dihydrodipicolinate Reductase, domain 2"/>
    <property type="match status" value="1"/>
</dbReference>
<dbReference type="Gene3D" id="3.40.50.720">
    <property type="entry name" value="NAD(P)-binding Rossmann-like Domain"/>
    <property type="match status" value="1"/>
</dbReference>
<dbReference type="InterPro" id="IPR017094">
    <property type="entry name" value="Biliverdin_Rdtase_A"/>
</dbReference>
<dbReference type="InterPro" id="IPR015249">
    <property type="entry name" value="Biliverdin_Rdtase_cat"/>
</dbReference>
<dbReference type="InterPro" id="IPR000683">
    <property type="entry name" value="Gfo/Idh/MocA-like_OxRdtase_N"/>
</dbReference>
<dbReference type="InterPro" id="IPR051450">
    <property type="entry name" value="Gfo/Idh/MocA_Oxidoreductases"/>
</dbReference>
<dbReference type="InterPro" id="IPR036291">
    <property type="entry name" value="NAD(P)-bd_dom_sf"/>
</dbReference>
<dbReference type="PANTHER" id="PTHR43377">
    <property type="entry name" value="BILIVERDIN REDUCTASE A"/>
    <property type="match status" value="1"/>
</dbReference>
<dbReference type="PANTHER" id="PTHR43377:SF1">
    <property type="entry name" value="BILIVERDIN REDUCTASE A"/>
    <property type="match status" value="1"/>
</dbReference>
<dbReference type="Pfam" id="PF09166">
    <property type="entry name" value="Biliv-reduc_cat"/>
    <property type="match status" value="1"/>
</dbReference>
<dbReference type="Pfam" id="PF01408">
    <property type="entry name" value="GFO_IDH_MocA"/>
    <property type="match status" value="1"/>
</dbReference>
<dbReference type="PIRSF" id="PIRSF037032">
    <property type="entry name" value="Biliverdin_reductase_A"/>
    <property type="match status" value="1"/>
</dbReference>
<dbReference type="SUPFAM" id="SSF55347">
    <property type="entry name" value="Glyceraldehyde-3-phosphate dehydrogenase-like, C-terminal domain"/>
    <property type="match status" value="1"/>
</dbReference>
<dbReference type="SUPFAM" id="SSF51735">
    <property type="entry name" value="NAD(P)-binding Rossmann-fold domains"/>
    <property type="match status" value="1"/>
</dbReference>
<keyword id="KW-0007">Acetylation</keyword>
<keyword id="KW-0963">Cytoplasm</keyword>
<keyword id="KW-0479">Metal-binding</keyword>
<keyword id="KW-0520">NAD</keyword>
<keyword id="KW-0521">NADP</keyword>
<keyword id="KW-0560">Oxidoreductase</keyword>
<keyword id="KW-0597">Phosphoprotein</keyword>
<keyword id="KW-1185">Reference proteome</keyword>
<keyword id="KW-0862">Zinc</keyword>
<reference key="1">
    <citation type="journal article" date="2005" name="Science">
        <title>The transcriptional landscape of the mammalian genome.</title>
        <authorList>
            <person name="Carninci P."/>
            <person name="Kasukawa T."/>
            <person name="Katayama S."/>
            <person name="Gough J."/>
            <person name="Frith M.C."/>
            <person name="Maeda N."/>
            <person name="Oyama R."/>
            <person name="Ravasi T."/>
            <person name="Lenhard B."/>
            <person name="Wells C."/>
            <person name="Kodzius R."/>
            <person name="Shimokawa K."/>
            <person name="Bajic V.B."/>
            <person name="Brenner S.E."/>
            <person name="Batalov S."/>
            <person name="Forrest A.R."/>
            <person name="Zavolan M."/>
            <person name="Davis M.J."/>
            <person name="Wilming L.G."/>
            <person name="Aidinis V."/>
            <person name="Allen J.E."/>
            <person name="Ambesi-Impiombato A."/>
            <person name="Apweiler R."/>
            <person name="Aturaliya R.N."/>
            <person name="Bailey T.L."/>
            <person name="Bansal M."/>
            <person name="Baxter L."/>
            <person name="Beisel K.W."/>
            <person name="Bersano T."/>
            <person name="Bono H."/>
            <person name="Chalk A.M."/>
            <person name="Chiu K.P."/>
            <person name="Choudhary V."/>
            <person name="Christoffels A."/>
            <person name="Clutterbuck D.R."/>
            <person name="Crowe M.L."/>
            <person name="Dalla E."/>
            <person name="Dalrymple B.P."/>
            <person name="de Bono B."/>
            <person name="Della Gatta G."/>
            <person name="di Bernardo D."/>
            <person name="Down T."/>
            <person name="Engstrom P."/>
            <person name="Fagiolini M."/>
            <person name="Faulkner G."/>
            <person name="Fletcher C.F."/>
            <person name="Fukushima T."/>
            <person name="Furuno M."/>
            <person name="Futaki S."/>
            <person name="Gariboldi M."/>
            <person name="Georgii-Hemming P."/>
            <person name="Gingeras T.R."/>
            <person name="Gojobori T."/>
            <person name="Green R.E."/>
            <person name="Gustincich S."/>
            <person name="Harbers M."/>
            <person name="Hayashi Y."/>
            <person name="Hensch T.K."/>
            <person name="Hirokawa N."/>
            <person name="Hill D."/>
            <person name="Huminiecki L."/>
            <person name="Iacono M."/>
            <person name="Ikeo K."/>
            <person name="Iwama A."/>
            <person name="Ishikawa T."/>
            <person name="Jakt M."/>
            <person name="Kanapin A."/>
            <person name="Katoh M."/>
            <person name="Kawasawa Y."/>
            <person name="Kelso J."/>
            <person name="Kitamura H."/>
            <person name="Kitano H."/>
            <person name="Kollias G."/>
            <person name="Krishnan S.P."/>
            <person name="Kruger A."/>
            <person name="Kummerfeld S.K."/>
            <person name="Kurochkin I.V."/>
            <person name="Lareau L.F."/>
            <person name="Lazarevic D."/>
            <person name="Lipovich L."/>
            <person name="Liu J."/>
            <person name="Liuni S."/>
            <person name="McWilliam S."/>
            <person name="Madan Babu M."/>
            <person name="Madera M."/>
            <person name="Marchionni L."/>
            <person name="Matsuda H."/>
            <person name="Matsuzawa S."/>
            <person name="Miki H."/>
            <person name="Mignone F."/>
            <person name="Miyake S."/>
            <person name="Morris K."/>
            <person name="Mottagui-Tabar S."/>
            <person name="Mulder N."/>
            <person name="Nakano N."/>
            <person name="Nakauchi H."/>
            <person name="Ng P."/>
            <person name="Nilsson R."/>
            <person name="Nishiguchi S."/>
            <person name="Nishikawa S."/>
            <person name="Nori F."/>
            <person name="Ohara O."/>
            <person name="Okazaki Y."/>
            <person name="Orlando V."/>
            <person name="Pang K.C."/>
            <person name="Pavan W.J."/>
            <person name="Pavesi G."/>
            <person name="Pesole G."/>
            <person name="Petrovsky N."/>
            <person name="Piazza S."/>
            <person name="Reed J."/>
            <person name="Reid J.F."/>
            <person name="Ring B.Z."/>
            <person name="Ringwald M."/>
            <person name="Rost B."/>
            <person name="Ruan Y."/>
            <person name="Salzberg S.L."/>
            <person name="Sandelin A."/>
            <person name="Schneider C."/>
            <person name="Schoenbach C."/>
            <person name="Sekiguchi K."/>
            <person name="Semple C.A."/>
            <person name="Seno S."/>
            <person name="Sessa L."/>
            <person name="Sheng Y."/>
            <person name="Shibata Y."/>
            <person name="Shimada H."/>
            <person name="Shimada K."/>
            <person name="Silva D."/>
            <person name="Sinclair B."/>
            <person name="Sperling S."/>
            <person name="Stupka E."/>
            <person name="Sugiura K."/>
            <person name="Sultana R."/>
            <person name="Takenaka Y."/>
            <person name="Taki K."/>
            <person name="Tammoja K."/>
            <person name="Tan S.L."/>
            <person name="Tang S."/>
            <person name="Taylor M.S."/>
            <person name="Tegner J."/>
            <person name="Teichmann S.A."/>
            <person name="Ueda H.R."/>
            <person name="van Nimwegen E."/>
            <person name="Verardo R."/>
            <person name="Wei C.L."/>
            <person name="Yagi K."/>
            <person name="Yamanishi H."/>
            <person name="Zabarovsky E."/>
            <person name="Zhu S."/>
            <person name="Zimmer A."/>
            <person name="Hide W."/>
            <person name="Bult C."/>
            <person name="Grimmond S.M."/>
            <person name="Teasdale R.D."/>
            <person name="Liu E.T."/>
            <person name="Brusic V."/>
            <person name="Quackenbush J."/>
            <person name="Wahlestedt C."/>
            <person name="Mattick J.S."/>
            <person name="Hume D.A."/>
            <person name="Kai C."/>
            <person name="Sasaki D."/>
            <person name="Tomaru Y."/>
            <person name="Fukuda S."/>
            <person name="Kanamori-Katayama M."/>
            <person name="Suzuki M."/>
            <person name="Aoki J."/>
            <person name="Arakawa T."/>
            <person name="Iida J."/>
            <person name="Imamura K."/>
            <person name="Itoh M."/>
            <person name="Kato T."/>
            <person name="Kawaji H."/>
            <person name="Kawagashira N."/>
            <person name="Kawashima T."/>
            <person name="Kojima M."/>
            <person name="Kondo S."/>
            <person name="Konno H."/>
            <person name="Nakano K."/>
            <person name="Ninomiya N."/>
            <person name="Nishio T."/>
            <person name="Okada M."/>
            <person name="Plessy C."/>
            <person name="Shibata K."/>
            <person name="Shiraki T."/>
            <person name="Suzuki S."/>
            <person name="Tagami M."/>
            <person name="Waki K."/>
            <person name="Watahiki A."/>
            <person name="Okamura-Oho Y."/>
            <person name="Suzuki H."/>
            <person name="Kawai J."/>
            <person name="Hayashizaki Y."/>
        </authorList>
    </citation>
    <scope>NUCLEOTIDE SEQUENCE [LARGE SCALE MRNA]</scope>
    <source>
        <strain>C57BL/6J</strain>
        <strain>NOD</strain>
        <tissue>Embryonic liver</tissue>
        <tissue>Kidney</tissue>
        <tissue>Spleen</tissue>
    </source>
</reference>
<reference key="2">
    <citation type="journal article" date="2004" name="Genome Res.">
        <title>The status, quality, and expansion of the NIH full-length cDNA project: the Mammalian Gene Collection (MGC).</title>
        <authorList>
            <consortium name="The MGC Project Team"/>
        </authorList>
    </citation>
    <scope>NUCLEOTIDE SEQUENCE [LARGE SCALE MRNA]</scope>
    <source>
        <tissue>Brain</tissue>
    </source>
</reference>
<reference key="3">
    <citation type="journal article" date="2010" name="Cell">
        <title>A tissue-specific atlas of mouse protein phosphorylation and expression.</title>
        <authorList>
            <person name="Huttlin E.L."/>
            <person name="Jedrychowski M.P."/>
            <person name="Elias J.E."/>
            <person name="Goswami T."/>
            <person name="Rad R."/>
            <person name="Beausoleil S.A."/>
            <person name="Villen J."/>
            <person name="Haas W."/>
            <person name="Sowa M.E."/>
            <person name="Gygi S.P."/>
        </authorList>
    </citation>
    <scope>PHOSPHORYLATION [LARGE SCALE ANALYSIS] AT SER-154</scope>
    <scope>IDENTIFICATION BY MASS SPECTROMETRY [LARGE SCALE ANALYSIS]</scope>
    <source>
        <tissue>Brain</tissue>
        <tissue>Brown adipose tissue</tissue>
        <tissue>Heart</tissue>
        <tissue>Kidney</tissue>
        <tissue>Liver</tissue>
        <tissue>Lung</tissue>
        <tissue>Pancreas</tissue>
        <tissue>Spleen</tissue>
        <tissue>Testis</tissue>
    </source>
</reference>
<comment type="function">
    <text evidence="2">Reduces the gamma-methene bridge of the open tetrapyrrole, biliverdin IXalpha, to bilirubin with the concomitant oxidation of a NADH or NADPH cofactor. Does not reduce bilirubin IXbeta. Uses the reactants NADH or NADPH depending on the pH; NADH is used at the acidic pH range (6-6.9) and NADPH at the alkaline range (8.5-8.7). NADPH, however, is the probable reactant in biological systems.</text>
</comment>
<comment type="catalytic activity">
    <reaction evidence="2">
        <text>(4Z,15Z)-bilirubin IXalpha + NAD(+) = biliverdin IXalpha + NADH + H(+)</text>
        <dbReference type="Rhea" id="RHEA:15797"/>
        <dbReference type="ChEBI" id="CHEBI:15378"/>
        <dbReference type="ChEBI" id="CHEBI:57540"/>
        <dbReference type="ChEBI" id="CHEBI:57945"/>
        <dbReference type="ChEBI" id="CHEBI:57977"/>
        <dbReference type="ChEBI" id="CHEBI:57991"/>
        <dbReference type="EC" id="1.3.1.24"/>
    </reaction>
</comment>
<comment type="catalytic activity">
    <reaction evidence="2">
        <text>(4Z,15Z)-bilirubin IXalpha + NADP(+) = biliverdin IXalpha + NADPH + H(+)</text>
        <dbReference type="Rhea" id="RHEA:15793"/>
        <dbReference type="ChEBI" id="CHEBI:15378"/>
        <dbReference type="ChEBI" id="CHEBI:57783"/>
        <dbReference type="ChEBI" id="CHEBI:57977"/>
        <dbReference type="ChEBI" id="CHEBI:57991"/>
        <dbReference type="ChEBI" id="CHEBI:58349"/>
        <dbReference type="EC" id="1.3.1.24"/>
    </reaction>
</comment>
<comment type="cofactor">
    <cofactor evidence="2">
        <name>Zn(2+)</name>
        <dbReference type="ChEBI" id="CHEBI:29105"/>
    </cofactor>
    <text evidence="2">Binds 1 zinc ion per subunit.</text>
</comment>
<comment type="pathway">
    <text>Porphyrin-containing compound metabolism; protoheme degradation.</text>
</comment>
<comment type="subunit">
    <text evidence="2">Monomer.</text>
</comment>
<comment type="subcellular location">
    <subcellularLocation>
        <location evidence="2">Cytoplasm</location>
        <location evidence="2">Cytosol</location>
    </subcellularLocation>
</comment>
<comment type="similarity">
    <text evidence="3">Belongs to the Gfo/Idh/MocA family. Biliverdin reductase subfamily.</text>
</comment>
<sequence>MSTEPKRKFGVVVVGVGRAGSVRIRDLKDPHSSAFLNLIGYVSRRELGSLDNVRQISLEDALRSQEVDVAYICTESSSHEDYIRQFLQAGKHVLVEYPMALSFAAAQELWELAAQKGRVLHEEHIELLMEEFEFLKREVAGKELLKGSLRFTASPLEEEKFGFPAFSGISRLTWLVSLFGELSLISATMENRKEDQYMKMTVQLETQNKSPLSWIEEKGPGLKRNRHISIHFKSGSLEEVPNVGVNKNIFLKDQDIFIQKLLGQVSAEDLAAEKKRILHCLELASDIQRLCHRKQ</sequence>